<comment type="function">
    <text evidence="1">Negatively regulates transcription of bacterial ribonucleotide reductase nrd genes and operons by binding to NrdR-boxes.</text>
</comment>
<comment type="cofactor">
    <cofactor evidence="1">
        <name>Zn(2+)</name>
        <dbReference type="ChEBI" id="CHEBI:29105"/>
    </cofactor>
    <text evidence="1">Binds 1 zinc ion.</text>
</comment>
<comment type="similarity">
    <text evidence="1">Belongs to the NrdR family.</text>
</comment>
<reference key="1">
    <citation type="journal article" date="2009" name="Appl. Environ. Microbiol.">
        <title>Genome analysis of the meat starter culture bacterium Staphylococcus carnosus TM300.</title>
        <authorList>
            <person name="Rosenstein R."/>
            <person name="Nerz C."/>
            <person name="Biswas L."/>
            <person name="Resch A."/>
            <person name="Raddatz G."/>
            <person name="Schuster S.C."/>
            <person name="Goetz F."/>
        </authorList>
    </citation>
    <scope>NUCLEOTIDE SEQUENCE [LARGE SCALE GENOMIC DNA]</scope>
    <source>
        <strain>TM300</strain>
    </source>
</reference>
<name>NRDR_STACT</name>
<keyword id="KW-0067">ATP-binding</keyword>
<keyword id="KW-0238">DNA-binding</keyword>
<keyword id="KW-0479">Metal-binding</keyword>
<keyword id="KW-0547">Nucleotide-binding</keyword>
<keyword id="KW-1185">Reference proteome</keyword>
<keyword id="KW-0678">Repressor</keyword>
<keyword id="KW-0804">Transcription</keyword>
<keyword id="KW-0805">Transcription regulation</keyword>
<keyword id="KW-0862">Zinc</keyword>
<keyword id="KW-0863">Zinc-finger</keyword>
<protein>
    <recommendedName>
        <fullName evidence="1">Transcriptional repressor NrdR</fullName>
    </recommendedName>
</protein>
<evidence type="ECO:0000255" key="1">
    <source>
        <dbReference type="HAMAP-Rule" id="MF_00440"/>
    </source>
</evidence>
<feature type="chain" id="PRO_1000191813" description="Transcriptional repressor NrdR">
    <location>
        <begin position="1"/>
        <end position="157"/>
    </location>
</feature>
<feature type="domain" description="ATP-cone" evidence="1">
    <location>
        <begin position="49"/>
        <end position="139"/>
    </location>
</feature>
<feature type="zinc finger region" evidence="1">
    <location>
        <begin position="3"/>
        <end position="34"/>
    </location>
</feature>
<gene>
    <name evidence="1" type="primary">nrdR</name>
    <name type="ordered locus">Sca_1292</name>
</gene>
<sequence>MKCPKCNSTHSRVVDSRHADEANAIRRRRECENCGTRFTTFEHIEMSPLIVVKKDGTREQFLREKILNGLVRSCEKRPVGYQQLEDITNKVEWRLRDEGQAEVSSREIGKHVMNLLMHVDQVSYVRFASVYKEFKDVDQLLESMQGILQEKNKRSDN</sequence>
<organism>
    <name type="scientific">Staphylococcus carnosus (strain TM300)</name>
    <dbReference type="NCBI Taxonomy" id="396513"/>
    <lineage>
        <taxon>Bacteria</taxon>
        <taxon>Bacillati</taxon>
        <taxon>Bacillota</taxon>
        <taxon>Bacilli</taxon>
        <taxon>Bacillales</taxon>
        <taxon>Staphylococcaceae</taxon>
        <taxon>Staphylococcus</taxon>
    </lineage>
</organism>
<accession>B9DNA8</accession>
<proteinExistence type="inferred from homology"/>
<dbReference type="EMBL" id="AM295250">
    <property type="protein sequence ID" value="CAL28198.1"/>
    <property type="molecule type" value="Genomic_DNA"/>
</dbReference>
<dbReference type="RefSeq" id="WP_015900538.1">
    <property type="nucleotide sequence ID" value="NC_012121.1"/>
</dbReference>
<dbReference type="SMR" id="B9DNA8"/>
<dbReference type="GeneID" id="93793715"/>
<dbReference type="KEGG" id="sca:SCA_1292"/>
<dbReference type="eggNOG" id="COG1327">
    <property type="taxonomic scope" value="Bacteria"/>
</dbReference>
<dbReference type="HOGENOM" id="CLU_108412_0_0_9"/>
<dbReference type="OrthoDB" id="9807461at2"/>
<dbReference type="BioCyc" id="SCAR396513:SCA_RS06440-MONOMER"/>
<dbReference type="Proteomes" id="UP000000444">
    <property type="component" value="Chromosome"/>
</dbReference>
<dbReference type="GO" id="GO:0005524">
    <property type="term" value="F:ATP binding"/>
    <property type="evidence" value="ECO:0007669"/>
    <property type="project" value="UniProtKB-KW"/>
</dbReference>
<dbReference type="GO" id="GO:0003677">
    <property type="term" value="F:DNA binding"/>
    <property type="evidence" value="ECO:0007669"/>
    <property type="project" value="UniProtKB-KW"/>
</dbReference>
<dbReference type="GO" id="GO:0008270">
    <property type="term" value="F:zinc ion binding"/>
    <property type="evidence" value="ECO:0007669"/>
    <property type="project" value="UniProtKB-UniRule"/>
</dbReference>
<dbReference type="GO" id="GO:0045892">
    <property type="term" value="P:negative regulation of DNA-templated transcription"/>
    <property type="evidence" value="ECO:0007669"/>
    <property type="project" value="UniProtKB-UniRule"/>
</dbReference>
<dbReference type="HAMAP" id="MF_00440">
    <property type="entry name" value="NrdR"/>
    <property type="match status" value="1"/>
</dbReference>
<dbReference type="InterPro" id="IPR005144">
    <property type="entry name" value="ATP-cone_dom"/>
</dbReference>
<dbReference type="InterPro" id="IPR055173">
    <property type="entry name" value="NrdR-like_N"/>
</dbReference>
<dbReference type="InterPro" id="IPR003796">
    <property type="entry name" value="RNR_NrdR-like"/>
</dbReference>
<dbReference type="NCBIfam" id="TIGR00244">
    <property type="entry name" value="transcriptional regulator NrdR"/>
    <property type="match status" value="1"/>
</dbReference>
<dbReference type="PANTHER" id="PTHR30455">
    <property type="entry name" value="TRANSCRIPTIONAL REPRESSOR NRDR"/>
    <property type="match status" value="1"/>
</dbReference>
<dbReference type="PANTHER" id="PTHR30455:SF2">
    <property type="entry name" value="TRANSCRIPTIONAL REPRESSOR NRDR"/>
    <property type="match status" value="1"/>
</dbReference>
<dbReference type="Pfam" id="PF03477">
    <property type="entry name" value="ATP-cone"/>
    <property type="match status" value="1"/>
</dbReference>
<dbReference type="Pfam" id="PF22811">
    <property type="entry name" value="Zn_ribbon_NrdR"/>
    <property type="match status" value="1"/>
</dbReference>
<dbReference type="PROSITE" id="PS51161">
    <property type="entry name" value="ATP_CONE"/>
    <property type="match status" value="1"/>
</dbReference>